<proteinExistence type="inferred from homology"/>
<organism>
    <name type="scientific">Campylobacter hominis (strain ATCC BAA-381 / DSM 21671 / CCUG 45161 / LMG 19568 / NCTC 13146 / CH001A)</name>
    <dbReference type="NCBI Taxonomy" id="360107"/>
    <lineage>
        <taxon>Bacteria</taxon>
        <taxon>Pseudomonadati</taxon>
        <taxon>Campylobacterota</taxon>
        <taxon>Epsilonproteobacteria</taxon>
        <taxon>Campylobacterales</taxon>
        <taxon>Campylobacteraceae</taxon>
        <taxon>Campylobacter</taxon>
    </lineage>
</organism>
<feature type="chain" id="PRO_1000063041" description="Imidazole glycerol phosphate synthase subunit HisF">
    <location>
        <begin position="1"/>
        <end position="252"/>
    </location>
</feature>
<feature type="active site" evidence="1">
    <location>
        <position position="13"/>
    </location>
</feature>
<feature type="active site" evidence="1">
    <location>
        <position position="132"/>
    </location>
</feature>
<comment type="function">
    <text evidence="1">IGPS catalyzes the conversion of PRFAR and glutamine to IGP, AICAR and glutamate. The HisF subunit catalyzes the cyclization activity that produces IGP and AICAR from PRFAR using the ammonia provided by the HisH subunit.</text>
</comment>
<comment type="catalytic activity">
    <reaction evidence="1">
        <text>5-[(5-phospho-1-deoxy-D-ribulos-1-ylimino)methylamino]-1-(5-phospho-beta-D-ribosyl)imidazole-4-carboxamide + L-glutamine = D-erythro-1-(imidazol-4-yl)glycerol 3-phosphate + 5-amino-1-(5-phospho-beta-D-ribosyl)imidazole-4-carboxamide + L-glutamate + H(+)</text>
        <dbReference type="Rhea" id="RHEA:24793"/>
        <dbReference type="ChEBI" id="CHEBI:15378"/>
        <dbReference type="ChEBI" id="CHEBI:29985"/>
        <dbReference type="ChEBI" id="CHEBI:58278"/>
        <dbReference type="ChEBI" id="CHEBI:58359"/>
        <dbReference type="ChEBI" id="CHEBI:58475"/>
        <dbReference type="ChEBI" id="CHEBI:58525"/>
        <dbReference type="EC" id="4.3.2.10"/>
    </reaction>
</comment>
<comment type="pathway">
    <text evidence="1">Amino-acid biosynthesis; L-histidine biosynthesis; L-histidine from 5-phospho-alpha-D-ribose 1-diphosphate: step 5/9.</text>
</comment>
<comment type="subunit">
    <text evidence="1">Heterodimer of HisH and HisF.</text>
</comment>
<comment type="subcellular location">
    <subcellularLocation>
        <location evidence="1">Cytoplasm</location>
    </subcellularLocation>
</comment>
<comment type="similarity">
    <text evidence="1">Belongs to the HisA/HisF family.</text>
</comment>
<name>HIS6_CAMHC</name>
<gene>
    <name evidence="1" type="primary">hisF</name>
    <name type="ordered locus">CHAB381_1745</name>
</gene>
<reference key="1">
    <citation type="submission" date="2007-07" db="EMBL/GenBank/DDBJ databases">
        <title>Complete genome sequence of Campylobacter hominis ATCC BAA-381, a commensal isolated from the human gastrointestinal tract.</title>
        <authorList>
            <person name="Fouts D.E."/>
            <person name="Mongodin E.F."/>
            <person name="Puiu D."/>
            <person name="Sebastian Y."/>
            <person name="Miller W.G."/>
            <person name="Mandrell R.E."/>
            <person name="Nelson K.E."/>
        </authorList>
    </citation>
    <scope>NUCLEOTIDE SEQUENCE [LARGE SCALE GENOMIC DNA]</scope>
    <source>
        <strain>ATCC BAA-381 / DSM 21671 / CCUG 45161 / LMG 19568 / NCTC 13146 / CH001A</strain>
    </source>
</reference>
<sequence length="252" mass="27365">MNNFAKRIIPCLDVNNGRVVKGVNFVNLIDAGDPVEVAKIYNDSGADELCFLDITASFENRDTIVEVVRNVASELFIPLTVGGGIRKIDDISRLLEAGCDKVSINSAAIKNPNFIDEAAKKFGSQCIVVAIDAKKTDQGYHVFINGGRVDTKIDVFSWSKEVENRGCGEILLTSMDRDGTKSGFDNYLTGKVSKSLGIPVIASGGAGCMEHIRDTFLAGADAALAASIFHFGEIKIDDLKRYLRTQNIEVRL</sequence>
<protein>
    <recommendedName>
        <fullName evidence="1">Imidazole glycerol phosphate synthase subunit HisF</fullName>
        <ecNumber evidence="1">4.3.2.10</ecNumber>
    </recommendedName>
    <alternativeName>
        <fullName evidence="1">IGP synthase cyclase subunit</fullName>
    </alternativeName>
    <alternativeName>
        <fullName evidence="1">IGP synthase subunit HisF</fullName>
    </alternativeName>
    <alternativeName>
        <fullName evidence="1">ImGP synthase subunit HisF</fullName>
        <shortName evidence="1">IGPS subunit HisF</shortName>
    </alternativeName>
</protein>
<keyword id="KW-0028">Amino-acid biosynthesis</keyword>
<keyword id="KW-0963">Cytoplasm</keyword>
<keyword id="KW-0368">Histidine biosynthesis</keyword>
<keyword id="KW-0456">Lyase</keyword>
<keyword id="KW-1185">Reference proteome</keyword>
<accession>A7I416</accession>
<dbReference type="EC" id="4.3.2.10" evidence="1"/>
<dbReference type="EMBL" id="CP000776">
    <property type="protein sequence ID" value="ABS51178.1"/>
    <property type="molecule type" value="Genomic_DNA"/>
</dbReference>
<dbReference type="RefSeq" id="WP_012109564.1">
    <property type="nucleotide sequence ID" value="NC_009714.1"/>
</dbReference>
<dbReference type="SMR" id="A7I416"/>
<dbReference type="STRING" id="360107.CHAB381_1745"/>
<dbReference type="KEGG" id="cha:CHAB381_1745"/>
<dbReference type="eggNOG" id="COG0107">
    <property type="taxonomic scope" value="Bacteria"/>
</dbReference>
<dbReference type="HOGENOM" id="CLU_048577_4_0_7"/>
<dbReference type="OrthoDB" id="9807749at2"/>
<dbReference type="UniPathway" id="UPA00031">
    <property type="reaction ID" value="UER00010"/>
</dbReference>
<dbReference type="Proteomes" id="UP000002407">
    <property type="component" value="Chromosome"/>
</dbReference>
<dbReference type="GO" id="GO:0005737">
    <property type="term" value="C:cytoplasm"/>
    <property type="evidence" value="ECO:0007669"/>
    <property type="project" value="UniProtKB-SubCell"/>
</dbReference>
<dbReference type="GO" id="GO:0000107">
    <property type="term" value="F:imidazoleglycerol-phosphate synthase activity"/>
    <property type="evidence" value="ECO:0007669"/>
    <property type="project" value="UniProtKB-UniRule"/>
</dbReference>
<dbReference type="GO" id="GO:0016829">
    <property type="term" value="F:lyase activity"/>
    <property type="evidence" value="ECO:0007669"/>
    <property type="project" value="UniProtKB-KW"/>
</dbReference>
<dbReference type="GO" id="GO:0000105">
    <property type="term" value="P:L-histidine biosynthetic process"/>
    <property type="evidence" value="ECO:0007669"/>
    <property type="project" value="UniProtKB-UniRule"/>
</dbReference>
<dbReference type="CDD" id="cd04731">
    <property type="entry name" value="HisF"/>
    <property type="match status" value="1"/>
</dbReference>
<dbReference type="FunFam" id="3.20.20.70:FF:000006">
    <property type="entry name" value="Imidazole glycerol phosphate synthase subunit HisF"/>
    <property type="match status" value="1"/>
</dbReference>
<dbReference type="Gene3D" id="3.20.20.70">
    <property type="entry name" value="Aldolase class I"/>
    <property type="match status" value="1"/>
</dbReference>
<dbReference type="HAMAP" id="MF_01013">
    <property type="entry name" value="HisF"/>
    <property type="match status" value="1"/>
</dbReference>
<dbReference type="InterPro" id="IPR013785">
    <property type="entry name" value="Aldolase_TIM"/>
</dbReference>
<dbReference type="InterPro" id="IPR006062">
    <property type="entry name" value="His_biosynth"/>
</dbReference>
<dbReference type="InterPro" id="IPR004651">
    <property type="entry name" value="HisF"/>
</dbReference>
<dbReference type="InterPro" id="IPR050064">
    <property type="entry name" value="IGPS_HisA/HisF"/>
</dbReference>
<dbReference type="InterPro" id="IPR011060">
    <property type="entry name" value="RibuloseP-bd_barrel"/>
</dbReference>
<dbReference type="NCBIfam" id="TIGR00735">
    <property type="entry name" value="hisF"/>
    <property type="match status" value="1"/>
</dbReference>
<dbReference type="PANTHER" id="PTHR21235:SF2">
    <property type="entry name" value="IMIDAZOLE GLYCEROL PHOSPHATE SYNTHASE HISHF"/>
    <property type="match status" value="1"/>
</dbReference>
<dbReference type="PANTHER" id="PTHR21235">
    <property type="entry name" value="IMIDAZOLE GLYCEROL PHOSPHATE SYNTHASE SUBUNIT HISF/H IGP SYNTHASE SUBUNIT HISF/H"/>
    <property type="match status" value="1"/>
</dbReference>
<dbReference type="Pfam" id="PF00977">
    <property type="entry name" value="His_biosynth"/>
    <property type="match status" value="1"/>
</dbReference>
<dbReference type="SUPFAM" id="SSF51366">
    <property type="entry name" value="Ribulose-phoshate binding barrel"/>
    <property type="match status" value="1"/>
</dbReference>
<evidence type="ECO:0000255" key="1">
    <source>
        <dbReference type="HAMAP-Rule" id="MF_01013"/>
    </source>
</evidence>